<sequence length="182" mass="20697">MQFNIPTLLTLFRVILIPFLVVVFYLPFAWAPMVSALIFCIAAITDWFDGFLARRWNQSTRFGAFLDPVADKVLVAIAMVLVTEHYHSWWVTLPAATMIAREIIISALREWMAELGKRSSVAVSWIGKVKTTAQMVALAWLLWRPNIWVEYAGIALFFVAAVLTLWSMLQYLSAARGDLLDQ</sequence>
<dbReference type="EC" id="2.7.8.5" evidence="2"/>
<dbReference type="EMBL" id="AE017220">
    <property type="protein sequence ID" value="AAX65854.1"/>
    <property type="molecule type" value="Genomic_DNA"/>
</dbReference>
<dbReference type="RefSeq" id="WP_011264318.1">
    <property type="nucleotide sequence ID" value="NC_006905.1"/>
</dbReference>
<dbReference type="SMR" id="Q57N57"/>
<dbReference type="KEGG" id="sec:SCH_1948"/>
<dbReference type="HOGENOM" id="CLU_051314_2_1_6"/>
<dbReference type="UniPathway" id="UPA00084">
    <property type="reaction ID" value="UER00503"/>
</dbReference>
<dbReference type="Proteomes" id="UP000000538">
    <property type="component" value="Chromosome"/>
</dbReference>
<dbReference type="GO" id="GO:0005886">
    <property type="term" value="C:plasma membrane"/>
    <property type="evidence" value="ECO:0007669"/>
    <property type="project" value="UniProtKB-SubCell"/>
</dbReference>
<dbReference type="GO" id="GO:0008444">
    <property type="term" value="F:CDP-diacylglycerol-glycerol-3-phosphate 3-phosphatidyltransferase activity"/>
    <property type="evidence" value="ECO:0007669"/>
    <property type="project" value="UniProtKB-UniRule"/>
</dbReference>
<dbReference type="GO" id="GO:0006655">
    <property type="term" value="P:phosphatidylglycerol biosynthetic process"/>
    <property type="evidence" value="ECO:0007669"/>
    <property type="project" value="UniProtKB-UniRule"/>
</dbReference>
<dbReference type="FunFam" id="1.20.120.1760:FF:000001">
    <property type="entry name" value="CDP-diacylglycerol--glycerol-3-phosphate 3-phosphatidyltransferase"/>
    <property type="match status" value="1"/>
</dbReference>
<dbReference type="Gene3D" id="1.20.120.1760">
    <property type="match status" value="1"/>
</dbReference>
<dbReference type="HAMAP" id="MF_01437">
    <property type="entry name" value="PgsA"/>
    <property type="match status" value="1"/>
</dbReference>
<dbReference type="InterPro" id="IPR050324">
    <property type="entry name" value="CDP-alcohol_PTase-I"/>
</dbReference>
<dbReference type="InterPro" id="IPR000462">
    <property type="entry name" value="CDP-OH_P_trans"/>
</dbReference>
<dbReference type="InterPro" id="IPR043130">
    <property type="entry name" value="CDP-OH_PTrfase_TM_dom"/>
</dbReference>
<dbReference type="InterPro" id="IPR048254">
    <property type="entry name" value="CDP_ALCOHOL_P_TRANSF_CS"/>
</dbReference>
<dbReference type="InterPro" id="IPR023762">
    <property type="entry name" value="PGP_synthase_bac"/>
</dbReference>
<dbReference type="InterPro" id="IPR004570">
    <property type="entry name" value="Phosphatidylglycerol_P_synth"/>
</dbReference>
<dbReference type="NCBIfam" id="TIGR00560">
    <property type="entry name" value="pgsA"/>
    <property type="match status" value="1"/>
</dbReference>
<dbReference type="NCBIfam" id="NF008090">
    <property type="entry name" value="PRK10832.1"/>
    <property type="match status" value="1"/>
</dbReference>
<dbReference type="PANTHER" id="PTHR14269:SF62">
    <property type="entry name" value="CDP-DIACYLGLYCEROL--GLYCEROL-3-PHOSPHATE 3-PHOSPHATIDYLTRANSFERASE 1, CHLOROPLASTIC"/>
    <property type="match status" value="1"/>
</dbReference>
<dbReference type="PANTHER" id="PTHR14269">
    <property type="entry name" value="CDP-DIACYLGLYCEROL--GLYCEROL-3-PHOSPHATE 3-PHOSPHATIDYLTRANSFERASE-RELATED"/>
    <property type="match status" value="1"/>
</dbReference>
<dbReference type="Pfam" id="PF01066">
    <property type="entry name" value="CDP-OH_P_transf"/>
    <property type="match status" value="1"/>
</dbReference>
<dbReference type="PIRSF" id="PIRSF000847">
    <property type="entry name" value="Phos_ph_gly_syn"/>
    <property type="match status" value="1"/>
</dbReference>
<dbReference type="PROSITE" id="PS00379">
    <property type="entry name" value="CDP_ALCOHOL_P_TRANSF"/>
    <property type="match status" value="1"/>
</dbReference>
<keyword id="KW-0997">Cell inner membrane</keyword>
<keyword id="KW-1003">Cell membrane</keyword>
<keyword id="KW-0444">Lipid biosynthesis</keyword>
<keyword id="KW-0443">Lipid metabolism</keyword>
<keyword id="KW-0472">Membrane</keyword>
<keyword id="KW-0594">Phospholipid biosynthesis</keyword>
<keyword id="KW-1208">Phospholipid metabolism</keyword>
<keyword id="KW-0808">Transferase</keyword>
<keyword id="KW-0812">Transmembrane</keyword>
<keyword id="KW-1133">Transmembrane helix</keyword>
<comment type="function">
    <text evidence="2">Catalyzes the conversion of cytidine diphosphate diacylglycerol (CDP-DG) and glycerol 3-phosphate into phosphatidylglycerol. Essential for the synthesis of anionic phospholipids, thereby playing a role in balancing the ratio of zwitterionic and anionic phospholipids, which is thought to be important for normal membrane function.</text>
</comment>
<comment type="catalytic activity">
    <reaction evidence="2">
        <text>a CDP-1,2-diacyl-sn-glycerol + sn-glycerol 3-phosphate = a 1,2-diacyl-sn-glycero-3-phospho-(1'-sn-glycero-3'-phosphate) + CMP + H(+)</text>
        <dbReference type="Rhea" id="RHEA:12593"/>
        <dbReference type="ChEBI" id="CHEBI:15378"/>
        <dbReference type="ChEBI" id="CHEBI:57597"/>
        <dbReference type="ChEBI" id="CHEBI:58332"/>
        <dbReference type="ChEBI" id="CHEBI:60110"/>
        <dbReference type="ChEBI" id="CHEBI:60377"/>
        <dbReference type="EC" id="2.7.8.5"/>
    </reaction>
</comment>
<comment type="pathway">
    <text evidence="2">Phospholipid metabolism; phosphatidylglycerol biosynthesis; phosphatidylglycerol from CDP-diacylglycerol: step 1/2.</text>
</comment>
<comment type="subcellular location">
    <subcellularLocation>
        <location evidence="2">Cell inner membrane</location>
        <topology evidence="2">Multi-pass membrane protein</topology>
    </subcellularLocation>
</comment>
<comment type="similarity">
    <text evidence="2">Belongs to the CDP-alcohol phosphatidyltransferase class-I family.</text>
</comment>
<organism>
    <name type="scientific">Salmonella choleraesuis (strain SC-B67)</name>
    <dbReference type="NCBI Taxonomy" id="321314"/>
    <lineage>
        <taxon>Bacteria</taxon>
        <taxon>Pseudomonadati</taxon>
        <taxon>Pseudomonadota</taxon>
        <taxon>Gammaproteobacteria</taxon>
        <taxon>Enterobacterales</taxon>
        <taxon>Enterobacteriaceae</taxon>
        <taxon>Salmonella</taxon>
    </lineage>
</organism>
<name>PGSA_SALCH</name>
<feature type="initiator methionine" description="Removed" evidence="1">
    <location>
        <position position="1"/>
    </location>
</feature>
<feature type="chain" id="PRO_0000239125" description="CDP-diacylglycerol--glycerol-3-phosphate 3-phosphatidyltransferase">
    <location>
        <begin position="2"/>
        <end position="182"/>
    </location>
</feature>
<feature type="topological domain" description="Cytoplasmic" evidence="2">
    <location>
        <begin position="2"/>
        <end position="12"/>
    </location>
</feature>
<feature type="transmembrane region" description="Helical" evidence="2">
    <location>
        <begin position="13"/>
        <end position="37"/>
    </location>
</feature>
<feature type="topological domain" description="Periplasmic" evidence="2">
    <location>
        <begin position="38"/>
        <end position="60"/>
    </location>
</feature>
<feature type="transmembrane region" description="Helical" evidence="2">
    <location>
        <begin position="61"/>
        <end position="81"/>
    </location>
</feature>
<feature type="topological domain" description="Cytoplasmic" evidence="2">
    <location>
        <begin position="82"/>
        <end position="86"/>
    </location>
</feature>
<feature type="transmembrane region" description="Helical" evidence="2">
    <location>
        <begin position="87"/>
        <end position="107"/>
    </location>
</feature>
<feature type="topological domain" description="Periplasmic" evidence="2">
    <location>
        <begin position="108"/>
        <end position="145"/>
    </location>
</feature>
<feature type="transmembrane region" description="Helical" evidence="2">
    <location>
        <begin position="146"/>
        <end position="168"/>
    </location>
</feature>
<feature type="topological domain" description="Cytoplasmic" evidence="2">
    <location>
        <begin position="169"/>
        <end position="181"/>
    </location>
</feature>
<gene>
    <name evidence="2" type="primary">pgsA</name>
    <name type="ordered locus">SCH_1948</name>
</gene>
<reference key="1">
    <citation type="journal article" date="2005" name="Nucleic Acids Res.">
        <title>The genome sequence of Salmonella enterica serovar Choleraesuis, a highly invasive and resistant zoonotic pathogen.</title>
        <authorList>
            <person name="Chiu C.-H."/>
            <person name="Tang P."/>
            <person name="Chu C."/>
            <person name="Hu S."/>
            <person name="Bao Q."/>
            <person name="Yu J."/>
            <person name="Chou Y.-Y."/>
            <person name="Wang H.-S."/>
            <person name="Lee Y.-S."/>
        </authorList>
    </citation>
    <scope>NUCLEOTIDE SEQUENCE [LARGE SCALE GENOMIC DNA]</scope>
    <source>
        <strain>SC-B67</strain>
    </source>
</reference>
<accession>Q57N57</accession>
<evidence type="ECO:0000250" key="1"/>
<evidence type="ECO:0000255" key="2">
    <source>
        <dbReference type="HAMAP-Rule" id="MF_01437"/>
    </source>
</evidence>
<protein>
    <recommendedName>
        <fullName evidence="2">CDP-diacylglycerol--glycerol-3-phosphate 3-phosphatidyltransferase</fullName>
        <ecNumber evidence="2">2.7.8.5</ecNumber>
    </recommendedName>
    <alternativeName>
        <fullName evidence="2">Phosphatidylglycerophosphate synthase</fullName>
        <shortName evidence="2">PGP synthase</shortName>
    </alternativeName>
</protein>
<proteinExistence type="inferred from homology"/>